<comment type="function">
    <text evidence="2">RNA-directed RNA polymerase that is involved in both transcription and genome replication. Together with VP3 capping enzyme, forms an enzyme complex positioned near the channels situated at each of the five-fold vertices of the core. Following infection, the outermost layer of the virus is lost, leaving a double-layered particle (DLP) made up of the core and VP6 shell. VP1 then catalyzes the transcription of fully conservative plus-strand genomic RNAs that are extruded through the DLP's channels into the cytoplasm where they function as mRNAs for translation of viral proteins. One copy of each of the viral (+)RNAs is also recruited during core assembly, together with newly synthesized polymerase complexes and VP2. The polymerase of these novo-formed particles catalyzes the synthesis of complementary minus-strands leading to dsRNA formation. To do so, the polymerase specifically recognizes and binds 4 bases 5'-UGUG-3' in the conserved 3'-sequence of plus-strand RNA templates. VP2 presumably activates the autoinhibited VP1-RNA complex to coordinate packaging and genome replication. Once dsRNA synthesis is complete, the polymerase switches to the transcriptional mode, thus providing secondary transcription (By similarity).</text>
</comment>
<comment type="catalytic activity">
    <reaction evidence="2">
        <text>RNA(n) + a ribonucleoside 5'-triphosphate = RNA(n+1) + diphosphate</text>
        <dbReference type="Rhea" id="RHEA:21248"/>
        <dbReference type="Rhea" id="RHEA-COMP:14527"/>
        <dbReference type="Rhea" id="RHEA-COMP:17342"/>
        <dbReference type="ChEBI" id="CHEBI:33019"/>
        <dbReference type="ChEBI" id="CHEBI:61557"/>
        <dbReference type="ChEBI" id="CHEBI:140395"/>
        <dbReference type="EC" id="2.7.7.48"/>
    </reaction>
</comment>
<comment type="cofactor">
    <cofactor evidence="3">
        <name>Mg(2+)</name>
        <dbReference type="ChEBI" id="CHEBI:18420"/>
    </cofactor>
</comment>
<comment type="subunit">
    <text evidence="1 3">Interacts with VP3 (Potential). Interacts with VP2; this interaction activates VP1. Interacts with NSP5; this interaction is probably necessary for the formation of functional virus factories. Interacts with NSP2; this interaction is weak (By similarity).</text>
</comment>
<comment type="subcellular location">
    <subcellularLocation>
        <location evidence="3">Virion</location>
    </subcellularLocation>
    <text evidence="1">Attached inside the inner capsid as a minor component. Also found in spherical cytoplasmic structures, called virus factories, that appear early after infection and are the site of viral replication and packaging (By similarity).</text>
</comment>
<comment type="similarity">
    <text evidence="3">Belongs to the reoviridae RNA-directed RNA polymerase family.</text>
</comment>
<dbReference type="EC" id="2.7.7.48"/>
<dbReference type="EMBL" id="DQ146693">
    <property type="protein sequence ID" value="ABA34190.1"/>
    <property type="molecule type" value="Genomic_RNA"/>
</dbReference>
<dbReference type="EMBL" id="EF583033">
    <property type="protein sequence ID" value="ABU87842.1"/>
    <property type="molecule type" value="Genomic_RNA"/>
</dbReference>
<dbReference type="SMR" id="A3DSK5"/>
<dbReference type="Proteomes" id="UP000001459">
    <property type="component" value="Genome"/>
</dbReference>
<dbReference type="GO" id="GO:0044423">
    <property type="term" value="C:virion component"/>
    <property type="evidence" value="ECO:0007669"/>
    <property type="project" value="UniProtKB-KW"/>
</dbReference>
<dbReference type="GO" id="GO:0000166">
    <property type="term" value="F:nucleotide binding"/>
    <property type="evidence" value="ECO:0007669"/>
    <property type="project" value="UniProtKB-KW"/>
</dbReference>
<dbReference type="GO" id="GO:0003723">
    <property type="term" value="F:RNA binding"/>
    <property type="evidence" value="ECO:0007669"/>
    <property type="project" value="UniProtKB-KW"/>
</dbReference>
<dbReference type="GO" id="GO:0003968">
    <property type="term" value="F:RNA-directed RNA polymerase activity"/>
    <property type="evidence" value="ECO:0007669"/>
    <property type="project" value="UniProtKB-KW"/>
</dbReference>
<dbReference type="GO" id="GO:0006351">
    <property type="term" value="P:DNA-templated transcription"/>
    <property type="evidence" value="ECO:0007669"/>
    <property type="project" value="InterPro"/>
</dbReference>
<dbReference type="GO" id="GO:0019079">
    <property type="term" value="P:viral genome replication"/>
    <property type="evidence" value="ECO:0007669"/>
    <property type="project" value="InterPro"/>
</dbReference>
<dbReference type="Gene3D" id="1.10.357.80">
    <property type="match status" value="2"/>
</dbReference>
<dbReference type="Gene3D" id="1.20.120.1390">
    <property type="match status" value="1"/>
</dbReference>
<dbReference type="Gene3D" id="3.30.230.140">
    <property type="match status" value="2"/>
</dbReference>
<dbReference type="Gene3D" id="3.30.70.2480">
    <property type="match status" value="1"/>
</dbReference>
<dbReference type="Gene3D" id="1.10.10.1990">
    <property type="entry name" value="Viral RNA-directed RNA polymerase, 4-helical domain"/>
    <property type="match status" value="1"/>
</dbReference>
<dbReference type="InterPro" id="IPR043502">
    <property type="entry name" value="DNA/RNA_pol_sf"/>
</dbReference>
<dbReference type="InterPro" id="IPR042032">
    <property type="entry name" value="RNA-dir_pol_4-hel_dom"/>
</dbReference>
<dbReference type="InterPro" id="IPR001795">
    <property type="entry name" value="RNA-dir_pol_luteovirus"/>
</dbReference>
<dbReference type="InterPro" id="IPR007097">
    <property type="entry name" value="RNA-dir_pol_reovirus"/>
</dbReference>
<dbReference type="InterPro" id="IPR022071">
    <property type="entry name" value="Rotavirus_VP1_C"/>
</dbReference>
<dbReference type="Pfam" id="PF02123">
    <property type="entry name" value="RdRP_4"/>
    <property type="match status" value="1"/>
</dbReference>
<dbReference type="Pfam" id="PF12289">
    <property type="entry name" value="Rotavirus_VP1"/>
    <property type="match status" value="1"/>
</dbReference>
<dbReference type="SUPFAM" id="SSF56672">
    <property type="entry name" value="DNA/RNA polymerases"/>
    <property type="match status" value="1"/>
</dbReference>
<dbReference type="PROSITE" id="PS50523">
    <property type="entry name" value="RDRP_DSRNA_REO"/>
    <property type="match status" value="1"/>
</dbReference>
<feature type="chain" id="PRO_0000368043" description="RNA-directed RNA polymerase">
    <location>
        <begin position="1"/>
        <end position="1088"/>
    </location>
</feature>
<feature type="domain" description="RdRp catalytic" evidence="2">
    <location>
        <begin position="501"/>
        <end position="687"/>
    </location>
</feature>
<reference key="1">
    <citation type="journal article" date="2007" name="J. Virol.">
        <title>Evolutionary history and global spread of the emerging G12 human rotaviruses.</title>
        <authorList>
            <person name="Rahman M."/>
            <person name="Matthijnssens J."/>
            <person name="Yang X."/>
            <person name="Delbeke T."/>
            <person name="Arijs I."/>
            <person name="Taniguchi K."/>
            <person name="Iturriza-Gomara M."/>
            <person name="Iftekharuddin N."/>
            <person name="Azim T."/>
            <person name="Van Ranst M."/>
        </authorList>
    </citation>
    <scope>NUCLEOTIDE SEQUENCE [GENOMIC RNA]</scope>
</reference>
<reference key="2">
    <citation type="journal article" date="2008" name="J. Virol.">
        <title>Full genome-based classification of rotaviruses reveals a common origin between human Wa-Like and porcine rotavirus strains and human DS-1-like and bovine rotavirus strains.</title>
        <authorList>
            <person name="Matthijnssens J."/>
            <person name="Ciarlet M."/>
            <person name="Heiman E.M."/>
            <person name="Arijs I."/>
            <person name="Delbeke T."/>
            <person name="McDonald S.M."/>
            <person name="Palombo E.A."/>
            <person name="Iturriza-Gomara M."/>
            <person name="Maes P."/>
            <person name="Patton J.T."/>
            <person name="Rahman M."/>
            <person name="Van Ranst M."/>
        </authorList>
    </citation>
    <scope>NUCLEOTIDE SEQUENCE [GENOMIC RNA]</scope>
</reference>
<protein>
    <recommendedName>
        <fullName>RNA-directed RNA polymerase</fullName>
        <ecNumber>2.7.7.48</ecNumber>
    </recommendedName>
    <alternativeName>
        <fullName>Protein VP1</fullName>
    </alternativeName>
</protein>
<sequence length="1088" mass="125293">MGKYNLILSEYLSFIYNSQSAVQIPIYYSSNSELESRCIEFHSKCLENSKNGLSLKKLFIEYNDVIENATLLSILSYSYDKYNAVERKLAKYARGKPLEADLTVNELDYENNKITSELFPTAEEYTDSLMDPAILTSLSSNLNAVMFWLEKHENDTAEKLKIYKRRLDLFTIVASTVNKYGVPRHNAKYRYEYDVMKDKPYYLVTWANSSIEMLMSVFSHEDYLIARELIVLSYSNRSTLAKLVSSPMSILVALVDINGTFITNEELELEFSNKYVRAIVPDQTFNELNQMLDNMRKAGLVDIPKMIQDWLTDCSIEKFPLMAKIYSWSFHVGFRKQKMLDAALDQLKTEYTEDVDEEMYREYTMLIRDEVVKMLEEPVKHDDHLLQDSELAGLLSMSSASNGESRQLKFGRKTIFSTKKNMHVMDDMANGRYTPGIIPPVNVDKPIPLGRRDVPGRRTRIIFILPYEYFIAQHAVVEKMLIYAKHTREYAEFYSQSNQLLSYGDVTRFLSNNAMVLYTDVSQWDSSQHNTQPFRKGIIMGLDILANMTNDTRVIQTLNLYKQTQINLMNSYVQIPDGNIIKKIQYGAVASGEKQTKAANSIANLALIKTVLSRISNKYSFVTKIIRVDGDDNYAVLQFNTEVTKQMVQDVSNDVRETYARMNAKVKALVSTVGIEIAKRYIAGGKIFFRAGINLLNNEKRGQNTQWDQAAVLYSNYIVNRLRGFETDREFILTKIMQMTSVAITGSLRLFPSERVLTTNSTFKIFDSEDFIIEYGTTDDEVYIQRAFMSLSSQRSGIADEIAASTTFKNYISKLSEQLLFSKNNIVSKGIALTEKAKLNSYAPISLEKRRAQISALLTMLQKPVTFKSSKITINDILRDIKPFFTLREAHLPIQYQKFMPTLPENVQYIIQCIGSRTYQIEDDGSKSAISRLISKYSVYKPSIEELYKVISLHENEIQLYLISLGIPKIDADTYVGSKIYSQDKYRILESYVYNLLSINYGCYQLFDFNSPDLEKLIRIPFKGKIPAVTFILHLYAKLEIINYAIKNGSWISLFCNYPKSEMIKLWKKMWNITSLRSPYTNANFFQD</sequence>
<evidence type="ECO:0000250" key="1"/>
<evidence type="ECO:0000255" key="2">
    <source>
        <dbReference type="PROSITE-ProRule" id="PRU00539"/>
    </source>
</evidence>
<evidence type="ECO:0000305" key="3"/>
<name>RDRP_ROTHL</name>
<keyword id="KW-0460">Magnesium</keyword>
<keyword id="KW-0547">Nucleotide-binding</keyword>
<keyword id="KW-0548">Nucleotidyltransferase</keyword>
<keyword id="KW-0694">RNA-binding</keyword>
<keyword id="KW-0696">RNA-directed RNA polymerase</keyword>
<keyword id="KW-0808">Transferase</keyword>
<keyword id="KW-0693">Viral RNA replication</keyword>
<keyword id="KW-0946">Virion</keyword>
<accession>A3DSK5</accession>
<accession>B1NKS5</accession>
<organism>
    <name type="scientific">Rotavirus A (strain RVA/Human/Philippines/L26/1987/G12P1B[4])</name>
    <name type="common">RV-A</name>
    <dbReference type="NCBI Taxonomy" id="10953"/>
    <lineage>
        <taxon>Viruses</taxon>
        <taxon>Riboviria</taxon>
        <taxon>Orthornavirae</taxon>
        <taxon>Duplornaviricota</taxon>
        <taxon>Resentoviricetes</taxon>
        <taxon>Reovirales</taxon>
        <taxon>Sedoreoviridae</taxon>
        <taxon>Rotavirus</taxon>
        <taxon>Rotavirus A</taxon>
    </lineage>
</organism>
<proteinExistence type="inferred from homology"/>
<organismHost>
    <name type="scientific">Homo sapiens</name>
    <name type="common">Human</name>
    <dbReference type="NCBI Taxonomy" id="9606"/>
</organismHost>